<feature type="chain" id="PRO_0000266329" description="Guanylate kinase">
    <location>
        <begin position="1"/>
        <end position="203"/>
    </location>
</feature>
<feature type="domain" description="Guanylate kinase-like" evidence="1">
    <location>
        <begin position="5"/>
        <end position="183"/>
    </location>
</feature>
<feature type="binding site" evidence="1">
    <location>
        <begin position="12"/>
        <end position="19"/>
    </location>
    <ligand>
        <name>ATP</name>
        <dbReference type="ChEBI" id="CHEBI:30616"/>
    </ligand>
</feature>
<evidence type="ECO:0000255" key="1">
    <source>
        <dbReference type="HAMAP-Rule" id="MF_00328"/>
    </source>
</evidence>
<reference key="1">
    <citation type="journal article" date="2009" name="BMC Microbiol.">
        <title>The genome sequence of Geobacter metallireducens: features of metabolism, physiology and regulation common and dissimilar to Geobacter sulfurreducens.</title>
        <authorList>
            <person name="Aklujkar M."/>
            <person name="Krushkal J."/>
            <person name="DiBartolo G."/>
            <person name="Lapidus A."/>
            <person name="Land M.L."/>
            <person name="Lovley D.R."/>
        </authorList>
    </citation>
    <scope>NUCLEOTIDE SEQUENCE [LARGE SCALE GENOMIC DNA]</scope>
    <source>
        <strain>ATCC 53774 / DSM 7210 / GS-15</strain>
    </source>
</reference>
<accession>Q39T72</accession>
<comment type="function">
    <text evidence="1">Essential for recycling GMP and indirectly, cGMP.</text>
</comment>
<comment type="catalytic activity">
    <reaction evidence="1">
        <text>GMP + ATP = GDP + ADP</text>
        <dbReference type="Rhea" id="RHEA:20780"/>
        <dbReference type="ChEBI" id="CHEBI:30616"/>
        <dbReference type="ChEBI" id="CHEBI:58115"/>
        <dbReference type="ChEBI" id="CHEBI:58189"/>
        <dbReference type="ChEBI" id="CHEBI:456216"/>
        <dbReference type="EC" id="2.7.4.8"/>
    </reaction>
</comment>
<comment type="subcellular location">
    <subcellularLocation>
        <location evidence="1">Cytoplasm</location>
    </subcellularLocation>
</comment>
<comment type="similarity">
    <text evidence="1">Belongs to the guanylate kinase family.</text>
</comment>
<sequence length="203" mass="23403">MKREGVLYIISAPSGAGKTTLCKEIIDIFPHLRHSVSYTTRQPRAGEVHGKDYYFISMDEFRSMVDKGEFAEWAEVHGNCYGTSIRTLEECRITGIDLILDIDIQGARQLKERYEGGVYIFILPPSYEELRRRLNGRSSDSDDVISRRIDAAAGEIRESRWYDYIIVNDQFSRAVEELKSVVVAERCRTFRVLETVTERFDMG</sequence>
<gene>
    <name evidence="1" type="primary">gmk</name>
    <name type="ordered locus">Gmet_2327</name>
</gene>
<proteinExistence type="inferred from homology"/>
<keyword id="KW-0067">ATP-binding</keyword>
<keyword id="KW-0963">Cytoplasm</keyword>
<keyword id="KW-0418">Kinase</keyword>
<keyword id="KW-0547">Nucleotide-binding</keyword>
<keyword id="KW-1185">Reference proteome</keyword>
<keyword id="KW-0808">Transferase</keyword>
<organism>
    <name type="scientific">Geobacter metallireducens (strain ATCC 53774 / DSM 7210 / GS-15)</name>
    <dbReference type="NCBI Taxonomy" id="269799"/>
    <lineage>
        <taxon>Bacteria</taxon>
        <taxon>Pseudomonadati</taxon>
        <taxon>Thermodesulfobacteriota</taxon>
        <taxon>Desulfuromonadia</taxon>
        <taxon>Geobacterales</taxon>
        <taxon>Geobacteraceae</taxon>
        <taxon>Geobacter</taxon>
    </lineage>
</organism>
<dbReference type="EC" id="2.7.4.8" evidence="1"/>
<dbReference type="EMBL" id="CP000148">
    <property type="protein sequence ID" value="ABB32552.1"/>
    <property type="molecule type" value="Genomic_DNA"/>
</dbReference>
<dbReference type="RefSeq" id="WP_004513293.1">
    <property type="nucleotide sequence ID" value="NC_007517.1"/>
</dbReference>
<dbReference type="SMR" id="Q39T72"/>
<dbReference type="STRING" id="269799.Gmet_2327"/>
<dbReference type="KEGG" id="gme:Gmet_2327"/>
<dbReference type="eggNOG" id="COG0194">
    <property type="taxonomic scope" value="Bacteria"/>
</dbReference>
<dbReference type="HOGENOM" id="CLU_001715_1_2_7"/>
<dbReference type="Proteomes" id="UP000007073">
    <property type="component" value="Chromosome"/>
</dbReference>
<dbReference type="GO" id="GO:0005829">
    <property type="term" value="C:cytosol"/>
    <property type="evidence" value="ECO:0007669"/>
    <property type="project" value="TreeGrafter"/>
</dbReference>
<dbReference type="GO" id="GO:0005524">
    <property type="term" value="F:ATP binding"/>
    <property type="evidence" value="ECO:0007669"/>
    <property type="project" value="UniProtKB-UniRule"/>
</dbReference>
<dbReference type="GO" id="GO:0004385">
    <property type="term" value="F:guanylate kinase activity"/>
    <property type="evidence" value="ECO:0007669"/>
    <property type="project" value="UniProtKB-UniRule"/>
</dbReference>
<dbReference type="CDD" id="cd00071">
    <property type="entry name" value="GMPK"/>
    <property type="match status" value="1"/>
</dbReference>
<dbReference type="FunFam" id="3.30.63.10:FF:000002">
    <property type="entry name" value="Guanylate kinase 1"/>
    <property type="match status" value="1"/>
</dbReference>
<dbReference type="Gene3D" id="3.30.63.10">
    <property type="entry name" value="Guanylate Kinase phosphate binding domain"/>
    <property type="match status" value="1"/>
</dbReference>
<dbReference type="Gene3D" id="3.40.50.300">
    <property type="entry name" value="P-loop containing nucleotide triphosphate hydrolases"/>
    <property type="match status" value="2"/>
</dbReference>
<dbReference type="HAMAP" id="MF_00328">
    <property type="entry name" value="Guanylate_kinase"/>
    <property type="match status" value="1"/>
</dbReference>
<dbReference type="InterPro" id="IPR008145">
    <property type="entry name" value="GK/Ca_channel_bsu"/>
</dbReference>
<dbReference type="InterPro" id="IPR008144">
    <property type="entry name" value="Guanylate_kin-like_dom"/>
</dbReference>
<dbReference type="InterPro" id="IPR017665">
    <property type="entry name" value="Guanylate_kinase"/>
</dbReference>
<dbReference type="InterPro" id="IPR020590">
    <property type="entry name" value="Guanylate_kinase_CS"/>
</dbReference>
<dbReference type="InterPro" id="IPR027417">
    <property type="entry name" value="P-loop_NTPase"/>
</dbReference>
<dbReference type="NCBIfam" id="TIGR03263">
    <property type="entry name" value="guanyl_kin"/>
    <property type="match status" value="1"/>
</dbReference>
<dbReference type="PANTHER" id="PTHR23117:SF13">
    <property type="entry name" value="GUANYLATE KINASE"/>
    <property type="match status" value="1"/>
</dbReference>
<dbReference type="PANTHER" id="PTHR23117">
    <property type="entry name" value="GUANYLATE KINASE-RELATED"/>
    <property type="match status" value="1"/>
</dbReference>
<dbReference type="Pfam" id="PF00625">
    <property type="entry name" value="Guanylate_kin"/>
    <property type="match status" value="1"/>
</dbReference>
<dbReference type="SMART" id="SM00072">
    <property type="entry name" value="GuKc"/>
    <property type="match status" value="1"/>
</dbReference>
<dbReference type="SUPFAM" id="SSF52540">
    <property type="entry name" value="P-loop containing nucleoside triphosphate hydrolases"/>
    <property type="match status" value="1"/>
</dbReference>
<dbReference type="PROSITE" id="PS00856">
    <property type="entry name" value="GUANYLATE_KINASE_1"/>
    <property type="match status" value="1"/>
</dbReference>
<dbReference type="PROSITE" id="PS50052">
    <property type="entry name" value="GUANYLATE_KINASE_2"/>
    <property type="match status" value="1"/>
</dbReference>
<name>KGUA_GEOMG</name>
<protein>
    <recommendedName>
        <fullName evidence="1">Guanylate kinase</fullName>
        <ecNumber evidence="1">2.7.4.8</ecNumber>
    </recommendedName>
    <alternativeName>
        <fullName evidence="1">GMP kinase</fullName>
    </alternativeName>
</protein>